<proteinExistence type="evidence at protein level"/>
<reference key="1">
    <citation type="journal article" date="2010" name="J. Proteome Res.">
        <title>Molecular diversification of peptide toxins from the tarantula Haplopelma hainanum (Ornithoctonus hainana) venom based on transcriptomic, peptidomic, and genomic analyses.</title>
        <authorList>
            <person name="Tang X."/>
            <person name="Zhang Y."/>
            <person name="Hu W."/>
            <person name="Xu D."/>
            <person name="Tao H."/>
            <person name="Yang X."/>
            <person name="Li Y."/>
            <person name="Jiang L."/>
            <person name="Liang S."/>
        </authorList>
    </citation>
    <scope>NUCLEOTIDE SEQUENCE [LARGE SCALE MRNA]</scope>
    <scope>PROTEIN SEQUENCE OF 75-113</scope>
    <scope>IDENTIFICATION BY MASS SPECTROMETRY</scope>
    <source>
        <tissue>Venom</tissue>
        <tissue>Venom gland</tissue>
    </source>
</reference>
<accession>D2Y2I2</accession>
<feature type="signal peptide" evidence="2">
    <location>
        <begin position="1"/>
        <end position="21"/>
    </location>
</feature>
<feature type="propeptide" id="PRO_0000400909" evidence="4">
    <location>
        <begin position="22"/>
        <end position="74"/>
    </location>
</feature>
<feature type="peptide" id="PRO_0000400910" description="U11-theraphotoxin-Hhn1a">
    <location>
        <begin position="75"/>
        <end position="113"/>
    </location>
</feature>
<feature type="region of interest" description="Disordered" evidence="3">
    <location>
        <begin position="60"/>
        <end position="83"/>
    </location>
</feature>
<feature type="compositionally biased region" description="Basic and acidic residues" evidence="3">
    <location>
        <begin position="60"/>
        <end position="69"/>
    </location>
</feature>
<feature type="disulfide bond" evidence="1">
    <location>
        <begin position="75"/>
        <end position="90"/>
    </location>
</feature>
<feature type="disulfide bond" evidence="1">
    <location>
        <begin position="82"/>
        <end position="95"/>
    </location>
</feature>
<feature type="disulfide bond" evidence="1">
    <location>
        <begin position="89"/>
        <end position="110"/>
    </location>
</feature>
<keyword id="KW-0903">Direct protein sequencing</keyword>
<keyword id="KW-1015">Disulfide bond</keyword>
<keyword id="KW-0872">Ion channel impairing toxin</keyword>
<keyword id="KW-0960">Knottin</keyword>
<keyword id="KW-0964">Secreted</keyword>
<keyword id="KW-0732">Signal</keyword>
<keyword id="KW-0800">Toxin</keyword>
<dbReference type="EMBL" id="GU293059">
    <property type="protein sequence ID" value="ADB56875.1"/>
    <property type="molecule type" value="mRNA"/>
</dbReference>
<dbReference type="ArachnoServer" id="AS001592">
    <property type="toxin name" value="U11-theraphotoxin-Hhn1a"/>
</dbReference>
<dbReference type="GO" id="GO:0005576">
    <property type="term" value="C:extracellular region"/>
    <property type="evidence" value="ECO:0007669"/>
    <property type="project" value="UniProtKB-SubCell"/>
</dbReference>
<dbReference type="GO" id="GO:0019871">
    <property type="term" value="F:sodium channel inhibitor activity"/>
    <property type="evidence" value="ECO:0007669"/>
    <property type="project" value="InterPro"/>
</dbReference>
<dbReference type="GO" id="GO:0090729">
    <property type="term" value="F:toxin activity"/>
    <property type="evidence" value="ECO:0007669"/>
    <property type="project" value="UniProtKB-KW"/>
</dbReference>
<dbReference type="InterPro" id="IPR012627">
    <property type="entry name" value="Toxin_22"/>
</dbReference>
<dbReference type="Pfam" id="PF08092">
    <property type="entry name" value="Toxin_22"/>
    <property type="match status" value="1"/>
</dbReference>
<comment type="function">
    <text evidence="1">Probable ion channel inhibitor.</text>
</comment>
<comment type="subcellular location">
    <subcellularLocation>
        <location>Secreted</location>
    </subcellularLocation>
</comment>
<comment type="tissue specificity">
    <text>Expressed by the venom gland.</text>
</comment>
<comment type="domain">
    <text evidence="1">The presence of a 'disulfide through disulfide knot' structurally defines this protein as a knottin.</text>
</comment>
<comment type="similarity">
    <text evidence="5">Belongs to the neurotoxin 14 (magi-1) family. 01 (HNTX-16) subfamily.</text>
</comment>
<protein>
    <recommendedName>
        <fullName>U11-theraphotoxin-Hhn1a</fullName>
        <shortName>U11-TRTX-Hhn1a</shortName>
    </recommendedName>
    <alternativeName>
        <fullName>Hainantoxin-XVI.27</fullName>
        <shortName>HNTX-XVI.27</shortName>
    </alternativeName>
    <alternativeName>
        <fullName>Peptide F4-19.87</fullName>
    </alternativeName>
</protein>
<sequence>MNTVRVTFLLVFVLAVSLGQADKDENRMEMQEKTEQGNSYLDFAENLLLQKLEELEAKLLEEDSEESRNSRQKRCIGEGVPCDENDPRCCSGLVCLKPTLHGIWYKSYYCYKK</sequence>
<evidence type="ECO:0000250" key="1"/>
<evidence type="ECO:0000255" key="2"/>
<evidence type="ECO:0000256" key="3">
    <source>
        <dbReference type="SAM" id="MobiDB-lite"/>
    </source>
</evidence>
<evidence type="ECO:0000269" key="4">
    <source>
    </source>
</evidence>
<evidence type="ECO:0000305" key="5"/>
<organism>
    <name type="scientific">Cyriopagopus hainanus</name>
    <name type="common">Chinese bird spider</name>
    <name type="synonym">Haplopelma hainanum</name>
    <dbReference type="NCBI Taxonomy" id="209901"/>
    <lineage>
        <taxon>Eukaryota</taxon>
        <taxon>Metazoa</taxon>
        <taxon>Ecdysozoa</taxon>
        <taxon>Arthropoda</taxon>
        <taxon>Chelicerata</taxon>
        <taxon>Arachnida</taxon>
        <taxon>Araneae</taxon>
        <taxon>Mygalomorphae</taxon>
        <taxon>Theraphosidae</taxon>
        <taxon>Haplopelma</taxon>
    </lineage>
</organism>
<name>H1627_CYRHA</name>